<comment type="function">
    <text evidence="1">By binding to ENY2, interferes with the nuclear functions of the deubiquitinase (DUB) module of the SAGA complex which consists of ENY2, ATXN7, ATXN7L3 and the histone deubiquitinating component USP22. Affects USP22 DUB activity toward histones indirectly by changing the subcellular distribution of ENY2 and altering ENY2 availability for ATXN7L3 interaction. Regulates H2B monoubiquitination (H2Bub1) levels through cytoplasmic sequestration of ENY2 resulting in loss of nuclear ENY2-ATXN7L3 association which destabilizes ATXN7L3. Affects protein expression levels of ENY2 and ATXN7L3.</text>
</comment>
<comment type="subunit">
    <text evidence="1">Interacts strongly with ENY2. Interacts weakly with USP22.</text>
</comment>
<comment type="subcellular location">
    <subcellularLocation>
        <location evidence="1">Cytoplasm</location>
    </subcellularLocation>
</comment>
<comment type="miscellaneous">
    <text>Encoded by an expressed retrotransposed copy of the Atxn7l3 locus that emerged prior to the speciation event separating primates and rodents.</text>
</comment>
<comment type="similarity">
    <text evidence="3">Belongs to the SGF11 family.</text>
</comment>
<gene>
    <name type="primary">Atxn7l3b</name>
</gene>
<protein>
    <recommendedName>
        <fullName>Ataxin-7-like protein 3B</fullName>
    </recommendedName>
</protein>
<dbReference type="EMBL" id="AK135540">
    <property type="protein sequence ID" value="BAE22575.1"/>
    <property type="molecule type" value="mRNA"/>
</dbReference>
<dbReference type="EMBL" id="AK150316">
    <property type="protein sequence ID" value="BAE29461.1"/>
    <property type="molecule type" value="mRNA"/>
</dbReference>
<dbReference type="CCDS" id="CCDS36060.1"/>
<dbReference type="RefSeq" id="NP_001028646.2">
    <property type="nucleotide sequence ID" value="NM_001033474.2"/>
</dbReference>
<dbReference type="FunCoup" id="Q3UD01">
    <property type="interactions" value="631"/>
</dbReference>
<dbReference type="STRING" id="10090.ENSMUSP00000096882"/>
<dbReference type="GlyGen" id="Q3UD01">
    <property type="glycosylation" value="1 site, 13 N-linked glycans (1 site)"/>
</dbReference>
<dbReference type="iPTMnet" id="Q3UD01"/>
<dbReference type="PhosphoSitePlus" id="Q3UD01"/>
<dbReference type="PaxDb" id="10090-ENSMUSP00000096882"/>
<dbReference type="PeptideAtlas" id="Q3UD01"/>
<dbReference type="ProteomicsDB" id="286035"/>
<dbReference type="Pumba" id="Q3UD01"/>
<dbReference type="Antibodypedia" id="52794">
    <property type="antibodies" value="49 antibodies from 11 providers"/>
</dbReference>
<dbReference type="DNASU" id="382423"/>
<dbReference type="Ensembl" id="ENSMUST00000099276.4">
    <property type="protein sequence ID" value="ENSMUSP00000096882.3"/>
    <property type="gene ID" value="ENSMUSG00000074748.4"/>
</dbReference>
<dbReference type="GeneID" id="382423"/>
<dbReference type="KEGG" id="mmu:382423"/>
<dbReference type="UCSC" id="uc007has.1">
    <property type="organism name" value="mouse"/>
</dbReference>
<dbReference type="AGR" id="MGI:1914971"/>
<dbReference type="CTD" id="552889"/>
<dbReference type="MGI" id="MGI:1914971">
    <property type="gene designation" value="Atxn7l3b"/>
</dbReference>
<dbReference type="VEuPathDB" id="HostDB:ENSMUSG00000074748"/>
<dbReference type="eggNOG" id="ENOG502TFV2">
    <property type="taxonomic scope" value="Eukaryota"/>
</dbReference>
<dbReference type="GeneTree" id="ENSGT00940000162576"/>
<dbReference type="HOGENOM" id="CLU_2359075_0_0_1"/>
<dbReference type="InParanoid" id="Q3UD01"/>
<dbReference type="OMA" id="GNGPDQE"/>
<dbReference type="OrthoDB" id="3487at9989"/>
<dbReference type="PhylomeDB" id="Q3UD01"/>
<dbReference type="TreeFam" id="TF353123"/>
<dbReference type="BioGRID-ORCS" id="382423">
    <property type="hits" value="1 hit in 76 CRISPR screens"/>
</dbReference>
<dbReference type="ChiTaRS" id="Atxn7l3b">
    <property type="organism name" value="mouse"/>
</dbReference>
<dbReference type="PRO" id="PR:Q3UD01"/>
<dbReference type="Proteomes" id="UP000000589">
    <property type="component" value="Chromosome 10"/>
</dbReference>
<dbReference type="RNAct" id="Q3UD01">
    <property type="molecule type" value="protein"/>
</dbReference>
<dbReference type="Bgee" id="ENSMUSG00000074748">
    <property type="expression patterns" value="Expressed in rostral migratory stream and 268 other cell types or tissues"/>
</dbReference>
<dbReference type="GO" id="GO:0005737">
    <property type="term" value="C:cytoplasm"/>
    <property type="evidence" value="ECO:0000250"/>
    <property type="project" value="UniProtKB"/>
</dbReference>
<dbReference type="GO" id="GO:0010468">
    <property type="term" value="P:regulation of gene expression"/>
    <property type="evidence" value="ECO:0000250"/>
    <property type="project" value="UniProtKB"/>
</dbReference>
<dbReference type="InterPro" id="IPR042933">
    <property type="entry name" value="ATXN7L3B"/>
</dbReference>
<dbReference type="PANTHER" id="PTHR47733">
    <property type="entry name" value="ATAXIN-7 LIKE PROTEIN 3B, ATXN7L3B"/>
    <property type="match status" value="1"/>
</dbReference>
<dbReference type="PANTHER" id="PTHR47733:SF1">
    <property type="entry name" value="ATAXIN-7-LIKE PROTEIN 3B"/>
    <property type="match status" value="1"/>
</dbReference>
<accession>Q3UD01</accession>
<organism>
    <name type="scientific">Mus musculus</name>
    <name type="common">Mouse</name>
    <dbReference type="NCBI Taxonomy" id="10090"/>
    <lineage>
        <taxon>Eukaryota</taxon>
        <taxon>Metazoa</taxon>
        <taxon>Chordata</taxon>
        <taxon>Craniata</taxon>
        <taxon>Vertebrata</taxon>
        <taxon>Euteleostomi</taxon>
        <taxon>Mammalia</taxon>
        <taxon>Eutheria</taxon>
        <taxon>Euarchontoglires</taxon>
        <taxon>Glires</taxon>
        <taxon>Rodentia</taxon>
        <taxon>Myomorpha</taxon>
        <taxon>Muroidea</taxon>
        <taxon>Muridae</taxon>
        <taxon>Murinae</taxon>
        <taxon>Mus</taxon>
        <taxon>Mus</taxon>
    </lineage>
</organism>
<feature type="chain" id="PRO_0000392530" description="Ataxin-7-like protein 3B">
    <location>
        <begin position="1"/>
        <end position="97"/>
    </location>
</feature>
<feature type="region of interest" description="Disordered" evidence="2">
    <location>
        <begin position="76"/>
        <end position="97"/>
    </location>
</feature>
<feature type="modified residue" description="Phosphoserine" evidence="4">
    <location>
        <position position="92"/>
    </location>
</feature>
<keyword id="KW-0963">Cytoplasm</keyword>
<keyword id="KW-0597">Phosphoprotein</keyword>
<keyword id="KW-1185">Reference proteome</keyword>
<proteinExistence type="evidence at protein level"/>
<reference key="1">
    <citation type="journal article" date="2005" name="Science">
        <title>The transcriptional landscape of the mammalian genome.</title>
        <authorList>
            <person name="Carninci P."/>
            <person name="Kasukawa T."/>
            <person name="Katayama S."/>
            <person name="Gough J."/>
            <person name="Frith M.C."/>
            <person name="Maeda N."/>
            <person name="Oyama R."/>
            <person name="Ravasi T."/>
            <person name="Lenhard B."/>
            <person name="Wells C."/>
            <person name="Kodzius R."/>
            <person name="Shimokawa K."/>
            <person name="Bajic V.B."/>
            <person name="Brenner S.E."/>
            <person name="Batalov S."/>
            <person name="Forrest A.R."/>
            <person name="Zavolan M."/>
            <person name="Davis M.J."/>
            <person name="Wilming L.G."/>
            <person name="Aidinis V."/>
            <person name="Allen J.E."/>
            <person name="Ambesi-Impiombato A."/>
            <person name="Apweiler R."/>
            <person name="Aturaliya R.N."/>
            <person name="Bailey T.L."/>
            <person name="Bansal M."/>
            <person name="Baxter L."/>
            <person name="Beisel K.W."/>
            <person name="Bersano T."/>
            <person name="Bono H."/>
            <person name="Chalk A.M."/>
            <person name="Chiu K.P."/>
            <person name="Choudhary V."/>
            <person name="Christoffels A."/>
            <person name="Clutterbuck D.R."/>
            <person name="Crowe M.L."/>
            <person name="Dalla E."/>
            <person name="Dalrymple B.P."/>
            <person name="de Bono B."/>
            <person name="Della Gatta G."/>
            <person name="di Bernardo D."/>
            <person name="Down T."/>
            <person name="Engstrom P."/>
            <person name="Fagiolini M."/>
            <person name="Faulkner G."/>
            <person name="Fletcher C.F."/>
            <person name="Fukushima T."/>
            <person name="Furuno M."/>
            <person name="Futaki S."/>
            <person name="Gariboldi M."/>
            <person name="Georgii-Hemming P."/>
            <person name="Gingeras T.R."/>
            <person name="Gojobori T."/>
            <person name="Green R.E."/>
            <person name="Gustincich S."/>
            <person name="Harbers M."/>
            <person name="Hayashi Y."/>
            <person name="Hensch T.K."/>
            <person name="Hirokawa N."/>
            <person name="Hill D."/>
            <person name="Huminiecki L."/>
            <person name="Iacono M."/>
            <person name="Ikeo K."/>
            <person name="Iwama A."/>
            <person name="Ishikawa T."/>
            <person name="Jakt M."/>
            <person name="Kanapin A."/>
            <person name="Katoh M."/>
            <person name="Kawasawa Y."/>
            <person name="Kelso J."/>
            <person name="Kitamura H."/>
            <person name="Kitano H."/>
            <person name="Kollias G."/>
            <person name="Krishnan S.P."/>
            <person name="Kruger A."/>
            <person name="Kummerfeld S.K."/>
            <person name="Kurochkin I.V."/>
            <person name="Lareau L.F."/>
            <person name="Lazarevic D."/>
            <person name="Lipovich L."/>
            <person name="Liu J."/>
            <person name="Liuni S."/>
            <person name="McWilliam S."/>
            <person name="Madan Babu M."/>
            <person name="Madera M."/>
            <person name="Marchionni L."/>
            <person name="Matsuda H."/>
            <person name="Matsuzawa S."/>
            <person name="Miki H."/>
            <person name="Mignone F."/>
            <person name="Miyake S."/>
            <person name="Morris K."/>
            <person name="Mottagui-Tabar S."/>
            <person name="Mulder N."/>
            <person name="Nakano N."/>
            <person name="Nakauchi H."/>
            <person name="Ng P."/>
            <person name="Nilsson R."/>
            <person name="Nishiguchi S."/>
            <person name="Nishikawa S."/>
            <person name="Nori F."/>
            <person name="Ohara O."/>
            <person name="Okazaki Y."/>
            <person name="Orlando V."/>
            <person name="Pang K.C."/>
            <person name="Pavan W.J."/>
            <person name="Pavesi G."/>
            <person name="Pesole G."/>
            <person name="Petrovsky N."/>
            <person name="Piazza S."/>
            <person name="Reed J."/>
            <person name="Reid J.F."/>
            <person name="Ring B.Z."/>
            <person name="Ringwald M."/>
            <person name="Rost B."/>
            <person name="Ruan Y."/>
            <person name="Salzberg S.L."/>
            <person name="Sandelin A."/>
            <person name="Schneider C."/>
            <person name="Schoenbach C."/>
            <person name="Sekiguchi K."/>
            <person name="Semple C.A."/>
            <person name="Seno S."/>
            <person name="Sessa L."/>
            <person name="Sheng Y."/>
            <person name="Shibata Y."/>
            <person name="Shimada H."/>
            <person name="Shimada K."/>
            <person name="Silva D."/>
            <person name="Sinclair B."/>
            <person name="Sperling S."/>
            <person name="Stupka E."/>
            <person name="Sugiura K."/>
            <person name="Sultana R."/>
            <person name="Takenaka Y."/>
            <person name="Taki K."/>
            <person name="Tammoja K."/>
            <person name="Tan S.L."/>
            <person name="Tang S."/>
            <person name="Taylor M.S."/>
            <person name="Tegner J."/>
            <person name="Teichmann S.A."/>
            <person name="Ueda H.R."/>
            <person name="van Nimwegen E."/>
            <person name="Verardo R."/>
            <person name="Wei C.L."/>
            <person name="Yagi K."/>
            <person name="Yamanishi H."/>
            <person name="Zabarovsky E."/>
            <person name="Zhu S."/>
            <person name="Zimmer A."/>
            <person name="Hide W."/>
            <person name="Bult C."/>
            <person name="Grimmond S.M."/>
            <person name="Teasdale R.D."/>
            <person name="Liu E.T."/>
            <person name="Brusic V."/>
            <person name="Quackenbush J."/>
            <person name="Wahlestedt C."/>
            <person name="Mattick J.S."/>
            <person name="Hume D.A."/>
            <person name="Kai C."/>
            <person name="Sasaki D."/>
            <person name="Tomaru Y."/>
            <person name="Fukuda S."/>
            <person name="Kanamori-Katayama M."/>
            <person name="Suzuki M."/>
            <person name="Aoki J."/>
            <person name="Arakawa T."/>
            <person name="Iida J."/>
            <person name="Imamura K."/>
            <person name="Itoh M."/>
            <person name="Kato T."/>
            <person name="Kawaji H."/>
            <person name="Kawagashira N."/>
            <person name="Kawashima T."/>
            <person name="Kojima M."/>
            <person name="Kondo S."/>
            <person name="Konno H."/>
            <person name="Nakano K."/>
            <person name="Ninomiya N."/>
            <person name="Nishio T."/>
            <person name="Okada M."/>
            <person name="Plessy C."/>
            <person name="Shibata K."/>
            <person name="Shiraki T."/>
            <person name="Suzuki S."/>
            <person name="Tagami M."/>
            <person name="Waki K."/>
            <person name="Watahiki A."/>
            <person name="Okamura-Oho Y."/>
            <person name="Suzuki H."/>
            <person name="Kawai J."/>
            <person name="Hayashizaki Y."/>
        </authorList>
    </citation>
    <scope>NUCLEOTIDE SEQUENCE [LARGE SCALE MRNA]</scope>
    <source>
        <strain>C57BL/6J</strain>
        <tissue>Bone marrow</tissue>
        <tissue>Muellerian duct</tissue>
    </source>
</reference>
<reference key="2">
    <citation type="journal article" date="2006" name="PLoS Comput. Biol.">
        <title>Genome-wide survey for biologically functional pseudogenes.</title>
        <authorList>
            <person name="Svensson O."/>
            <person name="Arvestad L."/>
            <person name="Lagergren J."/>
        </authorList>
    </citation>
    <scope>IDENTIFICATION</scope>
</reference>
<reference key="3">
    <citation type="journal article" date="2010" name="Cell">
        <title>A tissue-specific atlas of mouse protein phosphorylation and expression.</title>
        <authorList>
            <person name="Huttlin E.L."/>
            <person name="Jedrychowski M.P."/>
            <person name="Elias J.E."/>
            <person name="Goswami T."/>
            <person name="Rad R."/>
            <person name="Beausoleil S.A."/>
            <person name="Villen J."/>
            <person name="Haas W."/>
            <person name="Sowa M.E."/>
            <person name="Gygi S.P."/>
        </authorList>
    </citation>
    <scope>PHOSPHORYLATION [LARGE SCALE ANALYSIS] AT SER-92</scope>
    <scope>IDENTIFICATION BY MASS SPECTROMETRY [LARGE SCALE ANALYSIS]</scope>
    <source>
        <tissue>Brain</tissue>
        <tissue>Brown adipose tissue</tissue>
        <tissue>Heart</tissue>
        <tissue>Kidney</tissue>
        <tissue>Liver</tissue>
        <tissue>Pancreas</tissue>
        <tissue>Spleen</tissue>
        <tissue>Testis</tissue>
    </source>
</reference>
<sequence>MEEISLANLDTNKLEAIAQEIYVDLIEDSCLGFCFEVHRAVKCGYFYLEFADTGSVKDFGIQPVEDKGACRLPLCSLPGDPGDGPQTELQRSPPEFQ</sequence>
<evidence type="ECO:0000250" key="1">
    <source>
        <dbReference type="UniProtKB" id="Q96GX2"/>
    </source>
</evidence>
<evidence type="ECO:0000256" key="2">
    <source>
        <dbReference type="SAM" id="MobiDB-lite"/>
    </source>
</evidence>
<evidence type="ECO:0000305" key="3"/>
<evidence type="ECO:0007744" key="4">
    <source>
    </source>
</evidence>
<name>A7L3B_MOUSE</name>